<dbReference type="EMBL" id="CU928161">
    <property type="protein sequence ID" value="CAR01769.1"/>
    <property type="molecule type" value="Genomic_DNA"/>
</dbReference>
<dbReference type="RefSeq" id="WP_001138904.1">
    <property type="nucleotide sequence ID" value="NC_011742.1"/>
</dbReference>
<dbReference type="SMR" id="B7MD84"/>
<dbReference type="GeneID" id="93777034"/>
<dbReference type="KEGG" id="ecz:ECS88_0422"/>
<dbReference type="HOGENOM" id="CLU_099839_1_0_6"/>
<dbReference type="Proteomes" id="UP000000747">
    <property type="component" value="Chromosome"/>
</dbReference>
<dbReference type="GO" id="GO:0005829">
    <property type="term" value="C:cytosol"/>
    <property type="evidence" value="ECO:0007669"/>
    <property type="project" value="TreeGrafter"/>
</dbReference>
<dbReference type="GO" id="GO:0000166">
    <property type="term" value="F:nucleotide binding"/>
    <property type="evidence" value="ECO:0007669"/>
    <property type="project" value="TreeGrafter"/>
</dbReference>
<dbReference type="CDD" id="cd11740">
    <property type="entry name" value="YajQ_like"/>
    <property type="match status" value="1"/>
</dbReference>
<dbReference type="FunFam" id="3.30.70.860:FF:000001">
    <property type="entry name" value="UPF0234 protein YajQ"/>
    <property type="match status" value="1"/>
</dbReference>
<dbReference type="FunFam" id="3.30.70.990:FF:000001">
    <property type="entry name" value="UPF0234 protein YajQ"/>
    <property type="match status" value="1"/>
</dbReference>
<dbReference type="Gene3D" id="3.30.70.860">
    <property type="match status" value="1"/>
</dbReference>
<dbReference type="Gene3D" id="3.30.70.990">
    <property type="entry name" value="YajQ-like, domain 2"/>
    <property type="match status" value="1"/>
</dbReference>
<dbReference type="HAMAP" id="MF_00632">
    <property type="entry name" value="YajQ"/>
    <property type="match status" value="1"/>
</dbReference>
<dbReference type="InterPro" id="IPR007551">
    <property type="entry name" value="DUF520"/>
</dbReference>
<dbReference type="InterPro" id="IPR035571">
    <property type="entry name" value="UPF0234-like_C"/>
</dbReference>
<dbReference type="InterPro" id="IPR035570">
    <property type="entry name" value="UPF0234_N"/>
</dbReference>
<dbReference type="InterPro" id="IPR036183">
    <property type="entry name" value="YajQ-like_sf"/>
</dbReference>
<dbReference type="NCBIfam" id="NF003819">
    <property type="entry name" value="PRK05412.1"/>
    <property type="match status" value="1"/>
</dbReference>
<dbReference type="PANTHER" id="PTHR30476">
    <property type="entry name" value="UPF0234 PROTEIN YAJQ"/>
    <property type="match status" value="1"/>
</dbReference>
<dbReference type="PANTHER" id="PTHR30476:SF0">
    <property type="entry name" value="UPF0234 PROTEIN YAJQ"/>
    <property type="match status" value="1"/>
</dbReference>
<dbReference type="Pfam" id="PF04461">
    <property type="entry name" value="DUF520"/>
    <property type="match status" value="1"/>
</dbReference>
<dbReference type="SUPFAM" id="SSF89963">
    <property type="entry name" value="YajQ-like"/>
    <property type="match status" value="2"/>
</dbReference>
<comment type="function">
    <text evidence="1">Nucleotide-binding protein.</text>
</comment>
<comment type="similarity">
    <text evidence="1">Belongs to the YajQ family.</text>
</comment>
<keyword id="KW-0547">Nucleotide-binding</keyword>
<keyword id="KW-1185">Reference proteome</keyword>
<accession>B7MD84</accession>
<organism>
    <name type="scientific">Escherichia coli O45:K1 (strain S88 / ExPEC)</name>
    <dbReference type="NCBI Taxonomy" id="585035"/>
    <lineage>
        <taxon>Bacteria</taxon>
        <taxon>Pseudomonadati</taxon>
        <taxon>Pseudomonadota</taxon>
        <taxon>Gammaproteobacteria</taxon>
        <taxon>Enterobacterales</taxon>
        <taxon>Enterobacteriaceae</taxon>
        <taxon>Escherichia</taxon>
    </lineage>
</organism>
<proteinExistence type="inferred from homology"/>
<feature type="chain" id="PRO_1000130617" description="Nucleotide-binding protein YajQ">
    <location>
        <begin position="1"/>
        <end position="163"/>
    </location>
</feature>
<sequence>MPSFDIVSEVDLQEARNAVDNASREVESRFDFRNVEASFELNDASKTIKVLSESDFQVNQLLDILRAKLLKRGIEGSSLDVPENIVHSGKTWFVEAKLKQGIESATQKKIVKMIKDSKLKVQAQIQGDEIRVTGKSRDDLQAVMAMVRGGDLGQPFQFKNFRD</sequence>
<reference key="1">
    <citation type="journal article" date="2009" name="PLoS Genet.">
        <title>Organised genome dynamics in the Escherichia coli species results in highly diverse adaptive paths.</title>
        <authorList>
            <person name="Touchon M."/>
            <person name="Hoede C."/>
            <person name="Tenaillon O."/>
            <person name="Barbe V."/>
            <person name="Baeriswyl S."/>
            <person name="Bidet P."/>
            <person name="Bingen E."/>
            <person name="Bonacorsi S."/>
            <person name="Bouchier C."/>
            <person name="Bouvet O."/>
            <person name="Calteau A."/>
            <person name="Chiapello H."/>
            <person name="Clermont O."/>
            <person name="Cruveiller S."/>
            <person name="Danchin A."/>
            <person name="Diard M."/>
            <person name="Dossat C."/>
            <person name="Karoui M.E."/>
            <person name="Frapy E."/>
            <person name="Garry L."/>
            <person name="Ghigo J.M."/>
            <person name="Gilles A.M."/>
            <person name="Johnson J."/>
            <person name="Le Bouguenec C."/>
            <person name="Lescat M."/>
            <person name="Mangenot S."/>
            <person name="Martinez-Jehanne V."/>
            <person name="Matic I."/>
            <person name="Nassif X."/>
            <person name="Oztas S."/>
            <person name="Petit M.A."/>
            <person name="Pichon C."/>
            <person name="Rouy Z."/>
            <person name="Ruf C.S."/>
            <person name="Schneider D."/>
            <person name="Tourret J."/>
            <person name="Vacherie B."/>
            <person name="Vallenet D."/>
            <person name="Medigue C."/>
            <person name="Rocha E.P.C."/>
            <person name="Denamur E."/>
        </authorList>
    </citation>
    <scope>NUCLEOTIDE SEQUENCE [LARGE SCALE GENOMIC DNA]</scope>
    <source>
        <strain>S88 / ExPEC</strain>
    </source>
</reference>
<protein>
    <recommendedName>
        <fullName evidence="1">Nucleotide-binding protein YajQ</fullName>
    </recommendedName>
</protein>
<name>YAJQ_ECO45</name>
<gene>
    <name evidence="1" type="primary">yajQ</name>
    <name type="ordered locus">ECS88_0422</name>
</gene>
<evidence type="ECO:0000255" key="1">
    <source>
        <dbReference type="HAMAP-Rule" id="MF_00632"/>
    </source>
</evidence>